<gene>
    <name type="primary">THOC3</name>
</gene>
<keyword id="KW-0002">3D-structure</keyword>
<keyword id="KW-0007">Acetylation</keyword>
<keyword id="KW-0025">Alternative splicing</keyword>
<keyword id="KW-0507">mRNA processing</keyword>
<keyword id="KW-0508">mRNA splicing</keyword>
<keyword id="KW-0509">mRNA transport</keyword>
<keyword id="KW-0539">Nucleus</keyword>
<keyword id="KW-1267">Proteomics identification</keyword>
<keyword id="KW-1185">Reference proteome</keyword>
<keyword id="KW-0677">Repeat</keyword>
<keyword id="KW-0694">RNA-binding</keyword>
<keyword id="KW-0813">Transport</keyword>
<keyword id="KW-0853">WD repeat</keyword>
<dbReference type="EMBL" id="AC138965">
    <property type="status" value="NOT_ANNOTATED_CDS"/>
    <property type="molecule type" value="Genomic_DNA"/>
</dbReference>
<dbReference type="EMBL" id="AC139491">
    <property type="status" value="NOT_ANNOTATED_CDS"/>
    <property type="molecule type" value="Genomic_DNA"/>
</dbReference>
<dbReference type="EMBL" id="BC006849">
    <property type="protein sequence ID" value="AAH06849.1"/>
    <property type="molecule type" value="mRNA"/>
</dbReference>
<dbReference type="EMBL" id="BC066325">
    <property type="protein sequence ID" value="AAH66325.1"/>
    <property type="molecule type" value="mRNA"/>
</dbReference>
<dbReference type="EMBL" id="BC068499">
    <property type="protein sequence ID" value="AAH68499.1"/>
    <property type="molecule type" value="mRNA"/>
</dbReference>
<dbReference type="CCDS" id="CCDS4397.1">
    <molecule id="Q96J01-1"/>
</dbReference>
<dbReference type="CCDS" id="CCDS93829.1">
    <molecule id="Q96J01-2"/>
</dbReference>
<dbReference type="RefSeq" id="NP_001363831.1">
    <molecule id="Q96J01-2"/>
    <property type="nucleotide sequence ID" value="NM_001376902.1"/>
</dbReference>
<dbReference type="RefSeq" id="NP_115737.1">
    <molecule id="Q96J01-1"/>
    <property type="nucleotide sequence ID" value="NM_032361.4"/>
</dbReference>
<dbReference type="PDB" id="7APK">
    <property type="method" value="EM"/>
    <property type="resolution" value="3.30 A"/>
    <property type="chains" value="C/K/c/k=1-351"/>
</dbReference>
<dbReference type="PDB" id="7ZNK">
    <property type="method" value="EM"/>
    <property type="resolution" value="3.90 A"/>
    <property type="chains" value="C/K/c/k=1-351"/>
</dbReference>
<dbReference type="PDB" id="7ZNL">
    <property type="method" value="EM"/>
    <property type="resolution" value="3.45 A"/>
    <property type="chains" value="C/K/c/k=1-351"/>
</dbReference>
<dbReference type="PDBsum" id="7APK"/>
<dbReference type="PDBsum" id="7ZNK"/>
<dbReference type="PDBsum" id="7ZNL"/>
<dbReference type="EMDB" id="EMD-11857"/>
<dbReference type="EMDB" id="EMD-14804"/>
<dbReference type="EMDB" id="EMD-14808"/>
<dbReference type="SMR" id="Q96J01"/>
<dbReference type="BioGRID" id="124047">
    <property type="interactions" value="98"/>
</dbReference>
<dbReference type="ComplexPortal" id="CPX-2488">
    <property type="entry name" value="TREX transcription-export complex, DX39B variant"/>
</dbReference>
<dbReference type="ComplexPortal" id="CPX-7261">
    <property type="entry name" value="TREX transcription-export complex, DX39A variant"/>
</dbReference>
<dbReference type="CORUM" id="Q96J01"/>
<dbReference type="FunCoup" id="Q96J01">
    <property type="interactions" value="2166"/>
</dbReference>
<dbReference type="IntAct" id="Q96J01">
    <property type="interactions" value="44"/>
</dbReference>
<dbReference type="MINT" id="Q96J01"/>
<dbReference type="STRING" id="9606.ENSP00000265097"/>
<dbReference type="GlyGen" id="Q96J01">
    <property type="glycosylation" value="1 site, 1 O-linked glycan (1 site)"/>
</dbReference>
<dbReference type="iPTMnet" id="Q96J01"/>
<dbReference type="PhosphoSitePlus" id="Q96J01"/>
<dbReference type="SwissPalm" id="Q96J01"/>
<dbReference type="BioMuta" id="THOC3"/>
<dbReference type="DMDM" id="48474597"/>
<dbReference type="jPOST" id="Q96J01"/>
<dbReference type="MassIVE" id="Q96J01"/>
<dbReference type="PaxDb" id="9606-ENSP00000265097"/>
<dbReference type="PeptideAtlas" id="Q96J01"/>
<dbReference type="ProteomicsDB" id="66791"/>
<dbReference type="ProteomicsDB" id="76881">
    <molecule id="Q96J01-1"/>
</dbReference>
<dbReference type="Pumba" id="Q96J01"/>
<dbReference type="Antibodypedia" id="17111">
    <property type="antibodies" value="169 antibodies from 24 providers"/>
</dbReference>
<dbReference type="DNASU" id="84321"/>
<dbReference type="Ensembl" id="ENST00000265097.9">
    <molecule id="Q96J01-1"/>
    <property type="protein sequence ID" value="ENSP00000265097.5"/>
    <property type="gene ID" value="ENSG00000051596.10"/>
</dbReference>
<dbReference type="Ensembl" id="ENST00000513482.1">
    <molecule id="Q96J01-2"/>
    <property type="protein sequence ID" value="ENSP00000422243.1"/>
    <property type="gene ID" value="ENSG00000051596.10"/>
</dbReference>
<dbReference type="GeneID" id="84321"/>
<dbReference type="KEGG" id="hsa:84321"/>
<dbReference type="MANE-Select" id="ENST00000265097.9">
    <property type="protein sequence ID" value="ENSP00000265097.5"/>
    <property type="RefSeq nucleotide sequence ID" value="NM_032361.4"/>
    <property type="RefSeq protein sequence ID" value="NP_115737.1"/>
</dbReference>
<dbReference type="UCSC" id="uc003mdg.6">
    <molecule id="Q96J01-1"/>
    <property type="organism name" value="human"/>
</dbReference>
<dbReference type="AGR" id="HGNC:19072"/>
<dbReference type="CTD" id="84321"/>
<dbReference type="DisGeNET" id="84321"/>
<dbReference type="GeneCards" id="THOC3"/>
<dbReference type="HGNC" id="HGNC:19072">
    <property type="gene designation" value="THOC3"/>
</dbReference>
<dbReference type="HPA" id="ENSG00000051596">
    <property type="expression patterns" value="Low tissue specificity"/>
</dbReference>
<dbReference type="MIM" id="606929">
    <property type="type" value="gene"/>
</dbReference>
<dbReference type="neXtProt" id="NX_Q96J01"/>
<dbReference type="OpenTargets" id="ENSG00000051596"/>
<dbReference type="PharmGKB" id="PA134893535"/>
<dbReference type="VEuPathDB" id="HostDB:ENSG00000051596"/>
<dbReference type="eggNOG" id="KOG1407">
    <property type="taxonomic scope" value="Eukaryota"/>
</dbReference>
<dbReference type="GeneTree" id="ENSGT00940000158129"/>
<dbReference type="HOGENOM" id="CLU_045202_0_0_1"/>
<dbReference type="InParanoid" id="Q96J01"/>
<dbReference type="OMA" id="WNADGRH"/>
<dbReference type="OrthoDB" id="340259at2759"/>
<dbReference type="PAN-GO" id="Q96J01">
    <property type="GO annotations" value="2 GO annotations based on evolutionary models"/>
</dbReference>
<dbReference type="PhylomeDB" id="Q96J01"/>
<dbReference type="TreeFam" id="TF314069"/>
<dbReference type="PathwayCommons" id="Q96J01"/>
<dbReference type="Reactome" id="R-HSA-159236">
    <property type="pathway name" value="Transport of Mature mRNA derived from an Intron-Containing Transcript"/>
</dbReference>
<dbReference type="Reactome" id="R-HSA-72187">
    <property type="pathway name" value="mRNA 3'-end processing"/>
</dbReference>
<dbReference type="Reactome" id="R-HSA-73856">
    <property type="pathway name" value="RNA Polymerase II Transcription Termination"/>
</dbReference>
<dbReference type="SignaLink" id="Q96J01"/>
<dbReference type="SIGNOR" id="Q96J01"/>
<dbReference type="BioGRID-ORCS" id="84321">
    <property type="hits" value="790 hits in 1099 CRISPR screens"/>
</dbReference>
<dbReference type="ChiTaRS" id="THOC3">
    <property type="organism name" value="human"/>
</dbReference>
<dbReference type="GenomeRNAi" id="84321"/>
<dbReference type="Pharos" id="Q96J01">
    <property type="development level" value="Tbio"/>
</dbReference>
<dbReference type="PRO" id="PR:Q96J01"/>
<dbReference type="Proteomes" id="UP000005640">
    <property type="component" value="Chromosome 5"/>
</dbReference>
<dbReference type="RNAct" id="Q96J01">
    <property type="molecule type" value="protein"/>
</dbReference>
<dbReference type="Bgee" id="ENSG00000051596">
    <property type="expression patterns" value="Expressed in lower esophagus mucosa and 103 other cell types or tissues"/>
</dbReference>
<dbReference type="ExpressionAtlas" id="Q96J01">
    <property type="expression patterns" value="baseline and differential"/>
</dbReference>
<dbReference type="GO" id="GO:0016607">
    <property type="term" value="C:nuclear speck"/>
    <property type="evidence" value="ECO:0007669"/>
    <property type="project" value="UniProtKB-SubCell"/>
</dbReference>
<dbReference type="GO" id="GO:0005654">
    <property type="term" value="C:nucleoplasm"/>
    <property type="evidence" value="ECO:0000304"/>
    <property type="project" value="Reactome"/>
</dbReference>
<dbReference type="GO" id="GO:0000445">
    <property type="term" value="C:THO complex part of transcription export complex"/>
    <property type="evidence" value="ECO:0000314"/>
    <property type="project" value="UniProtKB"/>
</dbReference>
<dbReference type="GO" id="GO:0000346">
    <property type="term" value="C:transcription export complex"/>
    <property type="evidence" value="ECO:0000314"/>
    <property type="project" value="UniProtKB"/>
</dbReference>
<dbReference type="GO" id="GO:0003723">
    <property type="term" value="F:RNA binding"/>
    <property type="evidence" value="ECO:0007669"/>
    <property type="project" value="UniProtKB-KW"/>
</dbReference>
<dbReference type="GO" id="GO:0006406">
    <property type="term" value="P:mRNA export from nucleus"/>
    <property type="evidence" value="ECO:0000314"/>
    <property type="project" value="UniProtKB"/>
</dbReference>
<dbReference type="GO" id="GO:0006397">
    <property type="term" value="P:mRNA processing"/>
    <property type="evidence" value="ECO:0007669"/>
    <property type="project" value="UniProtKB-KW"/>
</dbReference>
<dbReference type="GO" id="GO:0008380">
    <property type="term" value="P:RNA splicing"/>
    <property type="evidence" value="ECO:0007669"/>
    <property type="project" value="UniProtKB-KW"/>
</dbReference>
<dbReference type="CDD" id="cd00200">
    <property type="entry name" value="WD40"/>
    <property type="match status" value="1"/>
</dbReference>
<dbReference type="FunFam" id="2.130.10.10:FF:000122">
    <property type="entry name" value="THO complex subunit 3"/>
    <property type="match status" value="1"/>
</dbReference>
<dbReference type="FunFam" id="2.130.10.10:FF:000166">
    <property type="entry name" value="THO complex subunit 3"/>
    <property type="match status" value="1"/>
</dbReference>
<dbReference type="Gene3D" id="2.130.10.10">
    <property type="entry name" value="YVTN repeat-like/Quinoprotein amine dehydrogenase"/>
    <property type="match status" value="2"/>
</dbReference>
<dbReference type="InterPro" id="IPR020472">
    <property type="entry name" value="G-protein_beta_WD-40_rep"/>
</dbReference>
<dbReference type="InterPro" id="IPR040132">
    <property type="entry name" value="Tex1/THOC3"/>
</dbReference>
<dbReference type="InterPro" id="IPR015943">
    <property type="entry name" value="WD40/YVTN_repeat-like_dom_sf"/>
</dbReference>
<dbReference type="InterPro" id="IPR036322">
    <property type="entry name" value="WD40_repeat_dom_sf"/>
</dbReference>
<dbReference type="InterPro" id="IPR001680">
    <property type="entry name" value="WD40_rpt"/>
</dbReference>
<dbReference type="PANTHER" id="PTHR22839:SF0">
    <property type="entry name" value="THO COMPLEX SUBUNIT 3"/>
    <property type="match status" value="1"/>
</dbReference>
<dbReference type="PANTHER" id="PTHR22839">
    <property type="entry name" value="THO COMPLEX SUBUNIT 3 THO3"/>
    <property type="match status" value="1"/>
</dbReference>
<dbReference type="Pfam" id="PF25174">
    <property type="entry name" value="Beta-prop_THOC3"/>
    <property type="match status" value="1"/>
</dbReference>
<dbReference type="PRINTS" id="PR00320">
    <property type="entry name" value="GPROTEINBRPT"/>
</dbReference>
<dbReference type="SMART" id="SM00320">
    <property type="entry name" value="WD40"/>
    <property type="match status" value="6"/>
</dbReference>
<dbReference type="SUPFAM" id="SSF50978">
    <property type="entry name" value="WD40 repeat-like"/>
    <property type="match status" value="1"/>
</dbReference>
<dbReference type="PROSITE" id="PS50082">
    <property type="entry name" value="WD_REPEATS_2"/>
    <property type="match status" value="3"/>
</dbReference>
<dbReference type="PROSITE" id="PS50294">
    <property type="entry name" value="WD_REPEATS_REGION"/>
    <property type="match status" value="1"/>
</dbReference>
<comment type="function">
    <text evidence="2 3 4 6 8">Component of the THO subcomplex of the TREX complex which is thought to couple mRNA transcription, processing and nuclear export, and which specifically associates with spliced mRNA and not with unspliced pre-mRNA (PubMed:15833825, PubMed:15998806, PubMed:17190602). Required for efficient export of polyadenylated RNA and spliced mRNA (PubMed:23222130). The THOC1-THOC2-THOC3 core complex alone is sufficient to bind export factor NXF1-NXT1 and promote ATPase activity of DDX39B (PubMed:33191911). TREX is recruited to spliced mRNAs by a transcription-independent mechanism, binds to mRNA upstream of the exon-junction complex (EJC) and is recruited in a splicing- and cap-dependent manner to a region near the 5' end of the mRNA where it functions in mRNA export to the cytoplasm via the TAP/NXF1 pathway (PubMed:15833825, PubMed:15998806, PubMed:17190602).</text>
</comment>
<comment type="function">
    <text evidence="5">(Microbial infection) The TREX complex is essential for the export of Kaposi's sarcoma-associated herpesvirus (KSHV) intronless mRNAs and infectious virus production.</text>
</comment>
<comment type="subunit">
    <text evidence="2 3 6 8 9">Component of the THO subcomplex, which is composed of THOC1, THOC2, THOC3, THOC5, THOC6 and THOC7 (PubMed:15833825, PubMed:15998806, PubMed:33191911, PubMed:37020021). The THO subcomplex interacts with DDX39B to form the THO-DDX39B complex which multimerizes into a 28-subunit tetrameric assembly (PubMed:33191911, PubMed:37020021). Component of the transcription/export (TREX) complex at least composed of ALYREF/THOC4, DDX39B, SARNP/CIP29, CHTOP and the THO subcomplex; in the complex interacts with THOC2 (PubMed:33191911, PubMed:37020021). TREX seems to have a dynamic structure involving ATP-dependent remodeling (PubMed:23222130, PubMed:37020021).</text>
</comment>
<comment type="subcellular location">
    <subcellularLocation>
        <location evidence="12">Nucleus</location>
    </subcellularLocation>
    <subcellularLocation>
        <location evidence="12">Nucleus speckle</location>
    </subcellularLocation>
</comment>
<comment type="alternative products">
    <event type="alternative splicing"/>
    <isoform>
        <id>Q96J01-1</id>
        <name>1</name>
        <sequence type="displayed"/>
    </isoform>
    <isoform>
        <id>Q96J01-2</id>
        <name>2</name>
        <sequence type="described" ref="VSP_056173"/>
    </isoform>
</comment>
<comment type="similarity">
    <text evidence="12">Belongs to the THOC3 family.</text>
</comment>
<comment type="caution">
    <text evidence="12">There are two almost identical copies of this gene on chromosome 5q35. One copy is frameshifted and unlikely to encode a functional protein.</text>
</comment>
<feature type="initiator methionine" description="Removed" evidence="16">
    <location>
        <position position="1"/>
    </location>
</feature>
<feature type="chain" id="PRO_0000051273" description="THO complex subunit 3">
    <location>
        <begin position="2"/>
        <end position="351"/>
    </location>
</feature>
<feature type="repeat" description="WD 1" evidence="13">
    <location>
        <begin position="53"/>
        <end position="94"/>
    </location>
</feature>
<feature type="repeat" description="WD 2" evidence="13">
    <location>
        <begin position="97"/>
        <end position="137"/>
    </location>
</feature>
<feature type="repeat" description="WD 3" evidence="13">
    <location>
        <begin position="139"/>
        <end position="178"/>
    </location>
</feature>
<feature type="repeat" description="WD 4" evidence="13">
    <location>
        <begin position="180"/>
        <end position="221"/>
    </location>
</feature>
<feature type="repeat" description="WD 5" evidence="13">
    <location>
        <begin position="222"/>
        <end position="261"/>
    </location>
</feature>
<feature type="repeat" description="WD 6" evidence="13">
    <location>
        <begin position="264"/>
        <end position="303"/>
    </location>
</feature>
<feature type="region of interest" description="Disordered" evidence="1">
    <location>
        <begin position="1"/>
        <end position="20"/>
    </location>
</feature>
<feature type="modified residue" description="N-acetylalanine" evidence="16">
    <location>
        <position position="2"/>
    </location>
</feature>
<feature type="splice variant" id="VSP_056173" description="In isoform 2." evidence="10">
    <original>DKLWEVQCESPTFTVAWHPKRPLLAFACDDKDGKYDSSREAGTVKLFGLPNDS</original>
    <variation>NFMRIYRLSPLAVRTSLVISSLHVTTSPA</variation>
    <location>
        <begin position="299"/>
        <end position="351"/>
    </location>
</feature>
<feature type="sequence variant" id="VAR_081223" evidence="7">
    <original>C</original>
    <variation>F</variation>
    <location>
        <position position="326"/>
    </location>
</feature>
<feature type="helix" evidence="17">
    <location>
        <begin position="29"/>
        <end position="41"/>
    </location>
</feature>
<feature type="strand" evidence="17">
    <location>
        <begin position="53"/>
        <end position="56"/>
    </location>
</feature>
<feature type="strand" evidence="17">
    <location>
        <begin position="58"/>
        <end position="64"/>
    </location>
</feature>
<feature type="turn" evidence="17">
    <location>
        <begin position="65"/>
        <end position="68"/>
    </location>
</feature>
<feature type="strand" evidence="17">
    <location>
        <begin position="69"/>
        <end position="74"/>
    </location>
</feature>
<feature type="strand" evidence="17">
    <location>
        <begin position="79"/>
        <end position="84"/>
    </location>
</feature>
<feature type="strand" evidence="17">
    <location>
        <begin position="86"/>
        <end position="95"/>
    </location>
</feature>
<feature type="strand" evidence="17">
    <location>
        <begin position="102"/>
        <end position="107"/>
    </location>
</feature>
<feature type="strand" evidence="17">
    <location>
        <begin position="109"/>
        <end position="131"/>
    </location>
</feature>
<feature type="strand" evidence="17">
    <location>
        <begin position="133"/>
        <end position="139"/>
    </location>
</feature>
<feature type="strand" evidence="17">
    <location>
        <begin position="146"/>
        <end position="149"/>
    </location>
</feature>
<feature type="strand" evidence="17">
    <location>
        <begin position="153"/>
        <end position="159"/>
    </location>
</feature>
<feature type="strand" evidence="17">
    <location>
        <begin position="161"/>
        <end position="169"/>
    </location>
</feature>
<feature type="turn" evidence="17">
    <location>
        <begin position="170"/>
        <end position="172"/>
    </location>
</feature>
<feature type="strand" evidence="17">
    <location>
        <begin position="174"/>
        <end position="180"/>
    </location>
</feature>
<feature type="strand" evidence="17">
    <location>
        <begin position="188"/>
        <end position="190"/>
    </location>
</feature>
<feature type="strand" evidence="17">
    <location>
        <begin position="194"/>
        <end position="200"/>
    </location>
</feature>
<feature type="turn" evidence="18">
    <location>
        <begin position="202"/>
        <end position="204"/>
    </location>
</feature>
<feature type="strand" evidence="17">
    <location>
        <begin position="206"/>
        <end position="210"/>
    </location>
</feature>
<feature type="turn" evidence="17">
    <location>
        <begin position="211"/>
        <end position="214"/>
    </location>
</feature>
<feature type="strand" evidence="17">
    <location>
        <begin position="215"/>
        <end position="220"/>
    </location>
</feature>
<feature type="strand" evidence="17">
    <location>
        <begin position="227"/>
        <end position="232"/>
    </location>
</feature>
<feature type="strand" evidence="17">
    <location>
        <begin position="234"/>
        <end position="243"/>
    </location>
</feature>
<feature type="strand" evidence="17">
    <location>
        <begin position="248"/>
        <end position="255"/>
    </location>
</feature>
<feature type="strand" evidence="17">
    <location>
        <begin position="258"/>
        <end position="262"/>
    </location>
</feature>
<feature type="strand" evidence="17">
    <location>
        <begin position="269"/>
        <end position="274"/>
    </location>
</feature>
<feature type="strand" evidence="17">
    <location>
        <begin position="278"/>
        <end position="285"/>
    </location>
</feature>
<feature type="strand" evidence="17">
    <location>
        <begin position="288"/>
        <end position="294"/>
    </location>
</feature>
<feature type="turn" evidence="17">
    <location>
        <begin position="295"/>
        <end position="297"/>
    </location>
</feature>
<feature type="strand" evidence="17">
    <location>
        <begin position="299"/>
        <end position="305"/>
    </location>
</feature>
<feature type="strand" evidence="17">
    <location>
        <begin position="310"/>
        <end position="314"/>
    </location>
</feature>
<feature type="strand" evidence="17">
    <location>
        <begin position="320"/>
        <end position="326"/>
    </location>
</feature>
<feature type="strand" evidence="17">
    <location>
        <begin position="342"/>
        <end position="346"/>
    </location>
</feature>
<protein>
    <recommendedName>
        <fullName evidence="11">THO complex subunit 3</fullName>
        <shortName>Tho3</shortName>
    </recommendedName>
    <alternativeName>
        <fullName>TEX1 homolog</fullName>
    </alternativeName>
    <alternativeName>
        <fullName>hTREX45</fullName>
    </alternativeName>
</protein>
<reference key="1">
    <citation type="journal article" date="2004" name="Nature">
        <title>The DNA sequence and comparative analysis of human chromosome 5.</title>
        <authorList>
            <person name="Schmutz J."/>
            <person name="Martin J."/>
            <person name="Terry A."/>
            <person name="Couronne O."/>
            <person name="Grimwood J."/>
            <person name="Lowry S."/>
            <person name="Gordon L.A."/>
            <person name="Scott D."/>
            <person name="Xie G."/>
            <person name="Huang W."/>
            <person name="Hellsten U."/>
            <person name="Tran-Gyamfi M."/>
            <person name="She X."/>
            <person name="Prabhakar S."/>
            <person name="Aerts A."/>
            <person name="Altherr M."/>
            <person name="Bajorek E."/>
            <person name="Black S."/>
            <person name="Branscomb E."/>
            <person name="Caoile C."/>
            <person name="Challacombe J.F."/>
            <person name="Chan Y.M."/>
            <person name="Denys M."/>
            <person name="Detter J.C."/>
            <person name="Escobar J."/>
            <person name="Flowers D."/>
            <person name="Fotopulos D."/>
            <person name="Glavina T."/>
            <person name="Gomez M."/>
            <person name="Gonzales E."/>
            <person name="Goodstein D."/>
            <person name="Grigoriev I."/>
            <person name="Groza M."/>
            <person name="Hammon N."/>
            <person name="Hawkins T."/>
            <person name="Haydu L."/>
            <person name="Israni S."/>
            <person name="Jett J."/>
            <person name="Kadner K."/>
            <person name="Kimball H."/>
            <person name="Kobayashi A."/>
            <person name="Lopez F."/>
            <person name="Lou Y."/>
            <person name="Martinez D."/>
            <person name="Medina C."/>
            <person name="Morgan J."/>
            <person name="Nandkeshwar R."/>
            <person name="Noonan J.P."/>
            <person name="Pitluck S."/>
            <person name="Pollard M."/>
            <person name="Predki P."/>
            <person name="Priest J."/>
            <person name="Ramirez L."/>
            <person name="Retterer J."/>
            <person name="Rodriguez A."/>
            <person name="Rogers S."/>
            <person name="Salamov A."/>
            <person name="Salazar A."/>
            <person name="Thayer N."/>
            <person name="Tice H."/>
            <person name="Tsai M."/>
            <person name="Ustaszewska A."/>
            <person name="Vo N."/>
            <person name="Wheeler J."/>
            <person name="Wu K."/>
            <person name="Yang J."/>
            <person name="Dickson M."/>
            <person name="Cheng J.-F."/>
            <person name="Eichler E.E."/>
            <person name="Olsen A."/>
            <person name="Pennacchio L.A."/>
            <person name="Rokhsar D.S."/>
            <person name="Richardson P."/>
            <person name="Lucas S.M."/>
            <person name="Myers R.M."/>
            <person name="Rubin E.M."/>
        </authorList>
    </citation>
    <scope>NUCLEOTIDE SEQUENCE [LARGE SCALE GENOMIC DNA]</scope>
</reference>
<reference key="2">
    <citation type="journal article" date="2004" name="Genome Res.">
        <title>The status, quality, and expansion of the NIH full-length cDNA project: the Mammalian Gene Collection (MGC).</title>
        <authorList>
            <consortium name="The MGC Project Team"/>
        </authorList>
    </citation>
    <scope>NUCLEOTIDE SEQUENCE [LARGE SCALE MRNA] (ISOFORMS 1 AND 2)</scope>
    <source>
        <tissue>Brain</tissue>
        <tissue>Placenta</tissue>
    </source>
</reference>
<reference key="3">
    <citation type="journal article" date="2002" name="Nature">
        <title>TREX is a conserved complex coupling transcription with messenger RNA export.</title>
        <authorList>
            <person name="Straesser K."/>
            <person name="Masuda S."/>
            <person name="Mason P."/>
            <person name="Pfannstiel J."/>
            <person name="Oppizzi M."/>
            <person name="Rodriguez-Navarro S."/>
            <person name="Rondon A.G."/>
            <person name="Aguilera A."/>
            <person name="Struhl K."/>
            <person name="Reed R."/>
            <person name="Hurt E."/>
        </authorList>
    </citation>
    <scope>FUNCTION</scope>
    <scope>INTERACTION WITH THE TREX COMPLEX</scope>
</reference>
<reference key="4">
    <citation type="journal article" date="2005" name="Cancer Res.">
        <title>Linking transcriptional elongation and messenger RNA export to metastatic breast cancers.</title>
        <authorList>
            <person name="Guo S."/>
            <person name="Hakimi M.A."/>
            <person name="Baillat D."/>
            <person name="Chen X."/>
            <person name="Farber M.J."/>
            <person name="Klein-Szanto A.J."/>
            <person name="Cooch N.S."/>
            <person name="Godwin A.K."/>
            <person name="Shiekhattar R."/>
        </authorList>
    </citation>
    <scope>IDENTIFICATION IN THE TREX COMPLEX</scope>
    <scope>FUNCTION OF THE TREX COMPLEX</scope>
    <scope>IDENTIFICATION BY MASS SPECTROMETRY</scope>
</reference>
<reference key="5">
    <citation type="journal article" date="2005" name="Genes Dev.">
        <title>Recruitment of the human TREX complex to mRNA during splicing.</title>
        <authorList>
            <person name="Masuda S."/>
            <person name="Das R."/>
            <person name="Cheng H."/>
            <person name="Hurt E."/>
            <person name="Dorman N."/>
            <person name="Reed R."/>
        </authorList>
    </citation>
    <scope>IDENTIFICATION IN THE TREX COMPLEX</scope>
    <scope>FUNCTION OF THE TREX COMPLEX</scope>
    <scope>IDENTIFICATION BY MASS SPECTROMETRY</scope>
</reference>
<reference key="6">
    <citation type="journal article" date="2006" name="Cell">
        <title>Human mRNA export machinery recruited to the 5' end of mRNA.</title>
        <authorList>
            <person name="Cheng H."/>
            <person name="Dufu K."/>
            <person name="Lee C.-S."/>
            <person name="Hsu J.L."/>
            <person name="Dias A."/>
            <person name="Reed R."/>
        </authorList>
    </citation>
    <scope>FUNCTION OF THE TREX COMPLEX</scope>
</reference>
<reference key="7">
    <citation type="journal article" date="2008" name="PLoS Pathog.">
        <title>Recruitment of the complete hTREX complex is required for Kaposi's sarcoma-associated herpesvirus intronless mRNA nuclear export and virus replication.</title>
        <authorList>
            <person name="Boyne J.R."/>
            <person name="Colgan K.J."/>
            <person name="Whitehouse A."/>
        </authorList>
    </citation>
    <scope>FUNCTION OF THE TREX COMPLEX (MICROBIAL INFECTION)</scope>
</reference>
<reference key="8">
    <citation type="journal article" date="2011" name="BMC Syst. Biol.">
        <title>Initial characterization of the human central proteome.</title>
        <authorList>
            <person name="Burkard T.R."/>
            <person name="Planyavsky M."/>
            <person name="Kaupe I."/>
            <person name="Breitwieser F.P."/>
            <person name="Buerckstuemmer T."/>
            <person name="Bennett K.L."/>
            <person name="Superti-Furga G."/>
            <person name="Colinge J."/>
        </authorList>
    </citation>
    <scope>IDENTIFICATION BY MASS SPECTROMETRY [LARGE SCALE ANALYSIS]</scope>
</reference>
<reference key="9">
    <citation type="journal article" date="2012" name="Mol. Cell. Proteomics">
        <title>Comparative large-scale characterisation of plant vs. mammal proteins reveals similar and idiosyncratic N-alpha acetylation features.</title>
        <authorList>
            <person name="Bienvenut W.V."/>
            <person name="Sumpton D."/>
            <person name="Martinez A."/>
            <person name="Lilla S."/>
            <person name="Espagne C."/>
            <person name="Meinnel T."/>
            <person name="Giglione C."/>
        </authorList>
    </citation>
    <scope>ACETYLATION [LARGE SCALE ANALYSIS] AT ALA-2</scope>
    <scope>CLEAVAGE OF INITIATOR METHIONINE [LARGE SCALE ANALYSIS]</scope>
    <scope>IDENTIFICATION BY MASS SPECTROMETRY [LARGE SCALE ANALYSIS]</scope>
</reference>
<reference key="10">
    <citation type="journal article" date="2013" name="Nucleic Acids Res.">
        <title>Aly and THO are required for assembly of the human TREX complex and association of TREX components with the spliced mRNA.</title>
        <authorList>
            <person name="Chi B."/>
            <person name="Wang Q."/>
            <person name="Wu G."/>
            <person name="Tan M."/>
            <person name="Wang L."/>
            <person name="Shi M."/>
            <person name="Chang X."/>
            <person name="Cheng H."/>
        </authorList>
    </citation>
    <scope>IDENTIFICATION IN THE THO COMPLEX</scope>
</reference>
<reference evidence="12" key="11">
    <citation type="journal article" date="2018" name="Clin. Genet.">
        <title>A novel nonsense variant in REEP6 is involved in a sporadic rod-cone dystrophy case.</title>
        <authorList>
            <person name="Mejecase C."/>
            <person name="Mohand-Said S."/>
            <person name="El Shamieh S."/>
            <person name="Antonio A."/>
            <person name="Condroyer C."/>
            <person name="Blanchard S."/>
            <person name="Letexier M."/>
            <person name="Saraiva J.P."/>
            <person name="Sahel J.A."/>
            <person name="Audo I."/>
            <person name="Zeitz C."/>
        </authorList>
    </citation>
    <scope>VARIANT PHE-326</scope>
</reference>
<reference evidence="13" key="12">
    <citation type="journal article" date="2020" name="Elife">
        <title>Structure of the human core transcription-export complex reveals a hub for multivalent interactions.</title>
        <authorList>
            <person name="Puehringer T."/>
            <person name="Hohmann U."/>
            <person name="Fin L."/>
            <person name="Pacheco-Fiallos B."/>
            <person name="Schellhaas U."/>
            <person name="Brennecke J."/>
            <person name="Plaschka C."/>
        </authorList>
    </citation>
    <scope>STRUCTURE BY ELECTRON MICROSCOPY (3.30 ANGSTROMS) IN THO-DDX39B COMPLEX</scope>
    <scope>FUNCTION</scope>
    <scope>SUBUNIT</scope>
</reference>
<reference evidence="14 15" key="13">
    <citation type="journal article" date="2023" name="Nature">
        <title>mRNA recognition and packaging by the human transcription-export complex.</title>
        <authorList>
            <person name="Pacheco-Fiallos B."/>
            <person name="Vorlander M.K."/>
            <person name="Riabov-Bassat D."/>
            <person name="Fin L."/>
            <person name="O'Reilly F.J."/>
            <person name="Ayala F.I."/>
            <person name="Schellhaas U."/>
            <person name="Rappsilber J."/>
            <person name="Plaschka C."/>
        </authorList>
    </citation>
    <scope>STRUCTURE BY ELECTRON MICROSCOPY (3.45 ANGSTROMS) IN TREX COMPLEX</scope>
    <scope>SUBUNIT</scope>
</reference>
<proteinExistence type="evidence at protein level"/>
<name>THOC3_HUMAN</name>
<accession>Q96J01</accession>
<accession>Q6NZ53</accession>
<evidence type="ECO:0000256" key="1">
    <source>
        <dbReference type="SAM" id="MobiDB-lite"/>
    </source>
</evidence>
<evidence type="ECO:0000269" key="2">
    <source>
    </source>
</evidence>
<evidence type="ECO:0000269" key="3">
    <source>
    </source>
</evidence>
<evidence type="ECO:0000269" key="4">
    <source>
    </source>
</evidence>
<evidence type="ECO:0000269" key="5">
    <source>
    </source>
</evidence>
<evidence type="ECO:0000269" key="6">
    <source>
    </source>
</evidence>
<evidence type="ECO:0000269" key="7">
    <source>
    </source>
</evidence>
<evidence type="ECO:0000269" key="8">
    <source>
    </source>
</evidence>
<evidence type="ECO:0000269" key="9">
    <source>
    </source>
</evidence>
<evidence type="ECO:0000303" key="10">
    <source>
    </source>
</evidence>
<evidence type="ECO:0000303" key="11">
    <source>
    </source>
</evidence>
<evidence type="ECO:0000305" key="12"/>
<evidence type="ECO:0007744" key="13">
    <source>
        <dbReference type="PDB" id="7APK"/>
    </source>
</evidence>
<evidence type="ECO:0007744" key="14">
    <source>
        <dbReference type="PDB" id="7ZNK"/>
    </source>
</evidence>
<evidence type="ECO:0007744" key="15">
    <source>
        <dbReference type="PDB" id="7ZNL"/>
    </source>
</evidence>
<evidence type="ECO:0007744" key="16">
    <source>
    </source>
</evidence>
<evidence type="ECO:0007829" key="17">
    <source>
        <dbReference type="PDB" id="7APK"/>
    </source>
</evidence>
<evidence type="ECO:0007829" key="18">
    <source>
        <dbReference type="PDB" id="7ZNL"/>
    </source>
</evidence>
<organism>
    <name type="scientific">Homo sapiens</name>
    <name type="common">Human</name>
    <dbReference type="NCBI Taxonomy" id="9606"/>
    <lineage>
        <taxon>Eukaryota</taxon>
        <taxon>Metazoa</taxon>
        <taxon>Chordata</taxon>
        <taxon>Craniata</taxon>
        <taxon>Vertebrata</taxon>
        <taxon>Euteleostomi</taxon>
        <taxon>Mammalia</taxon>
        <taxon>Eutheria</taxon>
        <taxon>Euarchontoglires</taxon>
        <taxon>Primates</taxon>
        <taxon>Haplorrhini</taxon>
        <taxon>Catarrhini</taxon>
        <taxon>Hominidae</taxon>
        <taxon>Homo</taxon>
    </lineage>
</organism>
<sequence>MAVPAAAMGPSALGQSGPGSMAPWCSVSSGPSRYVLGMQELFRGHSKTREFLAHSAKVHSVAWSCDGRRLASGSFDKTASVFLLEKDRLVKENNYRGHGDSVDQLCWHPSNPDLFVTASGDKTIRIWDVRTTKCIATVNTKGENINICWSPDGQTIAVGNKDDVVTFIDAKTHRSKAEEQFKFEVNEISWNNDNNMFFLTNGNGCINILSYPELKPVQSINAHPSNCICIKFDPMGKYFATGSADALVSLWDVDELVCVRCFSRLDWPVRTLSFSHDGKMLASASEDHFIDIAEVETGDKLWEVQCESPTFTVAWHPKRPLLAFACDDKDGKYDSSREAGTVKLFGLPNDS</sequence>